<feature type="signal peptide">
    <location>
        <begin position="1"/>
        <end position="21"/>
    </location>
</feature>
<feature type="chain" id="PRO_0000035412" description="Kappa-3-bungarotoxin">
    <location>
        <begin position="22"/>
        <end position="87"/>
    </location>
</feature>
<feature type="disulfide bond" evidence="1">
    <location>
        <begin position="24"/>
        <end position="42"/>
    </location>
</feature>
<feature type="disulfide bond" evidence="1">
    <location>
        <begin position="35"/>
        <end position="63"/>
    </location>
</feature>
<feature type="disulfide bond" evidence="1">
    <location>
        <begin position="48"/>
        <end position="52"/>
    </location>
</feature>
<feature type="disulfide bond" evidence="1">
    <location>
        <begin position="67"/>
        <end position="79"/>
    </location>
</feature>
<feature type="disulfide bond" evidence="1">
    <location>
        <begin position="80"/>
        <end position="85"/>
    </location>
</feature>
<feature type="sequence conflict" description="In Ref. 2; CAA72434." evidence="4" ref="2">
    <original>S</original>
    <variation>T</variation>
    <location>
        <position position="7"/>
    </location>
</feature>
<dbReference type="EMBL" id="X51413">
    <property type="protein sequence ID" value="CAA35775.1"/>
    <property type="molecule type" value="mRNA"/>
</dbReference>
<dbReference type="EMBL" id="Y11769">
    <property type="protein sequence ID" value="CAA72434.1"/>
    <property type="molecule type" value="mRNA"/>
</dbReference>
<dbReference type="PIR" id="S08398">
    <property type="entry name" value="B60549"/>
</dbReference>
<dbReference type="SMR" id="P15817"/>
<dbReference type="GO" id="GO:0005576">
    <property type="term" value="C:extracellular region"/>
    <property type="evidence" value="ECO:0007669"/>
    <property type="project" value="UniProtKB-SubCell"/>
</dbReference>
<dbReference type="GO" id="GO:0030550">
    <property type="term" value="F:acetylcholine receptor inhibitor activity"/>
    <property type="evidence" value="ECO:0007669"/>
    <property type="project" value="UniProtKB-KW"/>
</dbReference>
<dbReference type="GO" id="GO:0099106">
    <property type="term" value="F:ion channel regulator activity"/>
    <property type="evidence" value="ECO:0007669"/>
    <property type="project" value="UniProtKB-KW"/>
</dbReference>
<dbReference type="GO" id="GO:0090729">
    <property type="term" value="F:toxin activity"/>
    <property type="evidence" value="ECO:0007669"/>
    <property type="project" value="UniProtKB-KW"/>
</dbReference>
<dbReference type="CDD" id="cd00206">
    <property type="entry name" value="TFP_snake_toxin"/>
    <property type="match status" value="1"/>
</dbReference>
<dbReference type="Gene3D" id="2.10.60.10">
    <property type="entry name" value="CD59"/>
    <property type="match status" value="1"/>
</dbReference>
<dbReference type="InterPro" id="IPR003571">
    <property type="entry name" value="Snake_3FTx"/>
</dbReference>
<dbReference type="InterPro" id="IPR045860">
    <property type="entry name" value="Snake_toxin-like_sf"/>
</dbReference>
<dbReference type="InterPro" id="IPR018354">
    <property type="entry name" value="Snake_toxin_con_site"/>
</dbReference>
<dbReference type="InterPro" id="IPR054131">
    <property type="entry name" value="Toxin_cobra-type"/>
</dbReference>
<dbReference type="Pfam" id="PF21947">
    <property type="entry name" value="Toxin_cobra-type"/>
    <property type="match status" value="1"/>
</dbReference>
<dbReference type="SUPFAM" id="SSF57302">
    <property type="entry name" value="Snake toxin-like"/>
    <property type="match status" value="1"/>
</dbReference>
<dbReference type="PROSITE" id="PS00272">
    <property type="entry name" value="SNAKE_TOXIN"/>
    <property type="match status" value="1"/>
</dbReference>
<keyword id="KW-0008">Acetylcholine receptor inhibiting toxin</keyword>
<keyword id="KW-0903">Direct protein sequencing</keyword>
<keyword id="KW-1015">Disulfide bond</keyword>
<keyword id="KW-0872">Ion channel impairing toxin</keyword>
<keyword id="KW-0528">Neurotoxin</keyword>
<keyword id="KW-0629">Postsynaptic neurotoxin</keyword>
<keyword id="KW-0964">Secreted</keyword>
<keyword id="KW-0732">Signal</keyword>
<keyword id="KW-0800">Toxin</keyword>
<evidence type="ECO:0000250" key="1">
    <source>
        <dbReference type="UniProtKB" id="P01398"/>
    </source>
</evidence>
<evidence type="ECO:0000269" key="2">
    <source>
    </source>
</evidence>
<evidence type="ECO:0000303" key="3">
    <source>
    </source>
</evidence>
<evidence type="ECO:0000305" key="4"/>
<evidence type="ECO:0000305" key="5">
    <source>
    </source>
</evidence>
<proteinExistence type="evidence at protein level"/>
<protein>
    <recommendedName>
        <fullName evidence="3">Kappa-3-bungarotoxin</fullName>
        <shortName evidence="3">K3Bgt</shortName>
    </recommendedName>
    <alternativeName>
        <fullName>Kappa-neurotoxin</fullName>
    </alternativeName>
    <alternativeName>
        <fullName>Long neurotoxin CR1</fullName>
    </alternativeName>
</protein>
<sequence length="87" mass="9660">MKTLLLSLVVVTIVCLDLGYTRTCLISPSSTPQTCPNGQDICFRKAQCDNFCHSRGPVIEQGCVATCPQFRSNYRSLLCCRTDNCNH</sequence>
<reference key="1">
    <citation type="journal article" date="1990" name="Nucleic Acids Res.">
        <title>cDNA deduced amino-acid sequences of two novel kappa-neurotoxins from Bungarus multicinctus.</title>
        <authorList>
            <person name="Danse J.-M."/>
            <person name="Garnier J.-M."/>
        </authorList>
    </citation>
    <scope>NUCLEOTIDE SEQUENCE [GENOMIC DNA]</scope>
    <source>
        <tissue>Venom gland</tissue>
    </source>
</reference>
<reference key="2">
    <citation type="journal article" date="2002" name="Genetica">
        <title>Organization and phylogenetic analysis of kappa-bungarotoxin genes from Bungarus multicinctus (Taiwan banded krait).</title>
        <authorList>
            <person name="Chang L.-S."/>
            <person name="Chung C."/>
            <person name="Lin J."/>
            <person name="Hong E."/>
        </authorList>
    </citation>
    <scope>NUCLEOTIDE SEQUENCE [MRNA]</scope>
    <source>
        <tissue>Liver</tissue>
    </source>
</reference>
<reference key="3">
    <citation type="journal article" date="1990" name="Brain Res.">
        <title>Kappa 2-bungarotoxin and kappa 3-bungarotoxin: two new neuronal nicotinic receptor antagonists isolated from the venom of Bungarus multicinctus.</title>
        <authorList>
            <person name="Chiappinelli V.A."/>
            <person name="Wolf K.M."/>
            <person name="Grant G.A."/>
            <person name="Chen S.-J."/>
        </authorList>
    </citation>
    <scope>PROTEIN SEQUENCE OF 23-67</scope>
    <scope>FUNCTION</scope>
    <scope>SUBCELLULAR LOCATION</scope>
    <scope>SUBUNIT</scope>
    <source>
        <tissue>Venom</tissue>
    </source>
</reference>
<name>3LK3_BUNMU</name>
<comment type="function">
    <text evidence="1 2">Postsynaptic neurotoxin that binds and inhibits neuronal nicotinic acetylcholine receptors (nAChR) with high affinity (IC(50)&lt;100 nM). Is a selective, and slowly reversible antagonist of alpha-3/CHRNA3-containing and some alpha-4/CHRNA4-containing AChRs.</text>
</comment>
<comment type="subunit">
    <text evidence="2">Homodimer and heterodimer with kappa 2-bungarotoxin; non-covalently-linked.</text>
</comment>
<comment type="subcellular location">
    <subcellularLocation>
        <location evidence="2">Secreted</location>
    </subcellularLocation>
</comment>
<comment type="tissue specificity">
    <text evidence="4">Expressed by the venom gland.</text>
</comment>
<comment type="similarity">
    <text evidence="4">Belongs to the three-finger toxin family. Long-chain subfamily. Kappa-neurotoxin sub-subfamily.</text>
</comment>
<comment type="caution">
    <text evidence="5">The nucleotide sequence submitted as Y11769 is a genomic DNA sequence and not a mRNA sequence, as mentioned in the submission.</text>
</comment>
<organism>
    <name type="scientific">Bungarus multicinctus</name>
    <name type="common">Many-banded krait</name>
    <dbReference type="NCBI Taxonomy" id="8616"/>
    <lineage>
        <taxon>Eukaryota</taxon>
        <taxon>Metazoa</taxon>
        <taxon>Chordata</taxon>
        <taxon>Craniata</taxon>
        <taxon>Vertebrata</taxon>
        <taxon>Euteleostomi</taxon>
        <taxon>Lepidosauria</taxon>
        <taxon>Squamata</taxon>
        <taxon>Bifurcata</taxon>
        <taxon>Unidentata</taxon>
        <taxon>Episquamata</taxon>
        <taxon>Toxicofera</taxon>
        <taxon>Serpentes</taxon>
        <taxon>Colubroidea</taxon>
        <taxon>Elapidae</taxon>
        <taxon>Bungarinae</taxon>
        <taxon>Bungarus</taxon>
    </lineage>
</organism>
<accession>P15817</accession>
<accession>P87353</accession>